<proteinExistence type="inferred from homology"/>
<reference key="1">
    <citation type="journal article" date="2010" name="PLoS Genet.">
        <title>De novo assembly of a 40 Mb eukaryotic genome from short sequence reads: Sordaria macrospora, a model organism for fungal morphogenesis.</title>
        <authorList>
            <person name="Nowrousian M."/>
            <person name="Stajich J.E."/>
            <person name="Chu M."/>
            <person name="Engh I."/>
            <person name="Espagne E."/>
            <person name="Halliday K."/>
            <person name="Kamerewerd J."/>
            <person name="Kempken F."/>
            <person name="Knab B."/>
            <person name="Kuo H.-C."/>
            <person name="Osiewacz H.D."/>
            <person name="Poeggeler S."/>
            <person name="Read N.D."/>
            <person name="Seiler S."/>
            <person name="Smith K.M."/>
            <person name="Zickler D."/>
            <person name="Kueck U."/>
            <person name="Freitag M."/>
        </authorList>
    </citation>
    <scope>NUCLEOTIDE SEQUENCE [LARGE SCALE GENOMIC DNA]</scope>
    <source>
        <strain>ATCC MYA-333 / DSM 997 / K(L3346) / K-hell</strain>
    </source>
</reference>
<protein>
    <recommendedName>
        <fullName evidence="1">Arginine biosynthesis bifunctional protein ArgJ, mitochondrial</fullName>
    </recommendedName>
    <domain>
        <recommendedName>
            <fullName evidence="1">Glutamate N-acetyltransferase</fullName>
            <shortName evidence="1">GAT</shortName>
            <ecNumber evidence="1">2.3.1.35</ecNumber>
        </recommendedName>
        <alternativeName>
            <fullName evidence="1">Ornithine acetyltransferase</fullName>
            <shortName evidence="1">OATase</shortName>
        </alternativeName>
        <alternativeName>
            <fullName evidence="1">Ornithine transacetylase</fullName>
        </alternativeName>
    </domain>
    <domain>
        <recommendedName>
            <fullName evidence="1">Amino-acid acetyltransferase</fullName>
            <ecNumber evidence="1">2.3.1.1</ecNumber>
        </recommendedName>
        <alternativeName>
            <fullName evidence="1">N-acetylglutamate synthase</fullName>
            <shortName evidence="1">AGS</shortName>
        </alternativeName>
    </domain>
    <component>
        <recommendedName>
            <fullName evidence="1">Arginine biosynthesis bifunctional protein ArgJ alpha chain</fullName>
        </recommendedName>
    </component>
    <component>
        <recommendedName>
            <fullName evidence="1">Arginine biosynthesis bifunctional protein ArgJ beta chain</fullName>
        </recommendedName>
    </component>
</protein>
<keyword id="KW-0012">Acyltransferase</keyword>
<keyword id="KW-0028">Amino-acid biosynthesis</keyword>
<keyword id="KW-0055">Arginine biosynthesis</keyword>
<keyword id="KW-0068">Autocatalytic cleavage</keyword>
<keyword id="KW-0496">Mitochondrion</keyword>
<keyword id="KW-0511">Multifunctional enzyme</keyword>
<keyword id="KW-1185">Reference proteome</keyword>
<keyword id="KW-0808">Transferase</keyword>
<name>ARGJ_SORMK</name>
<accession>D1ZHR9</accession>
<accession>F7W0I7</accession>
<sequence length="469" mass="49572">MESLNGCVLSQLRQSGAQLTRTLQKVQSRSYSAPVSGSIPAAKKKYVPTSGTYPLGFSASGINVGVKPKNTTKPDVCLVASDRPCAAAAVFTKNKFQAAPVTFSRSLLQKKGNQGIQGVVVNSGCANAVTGKGGLEDAGKMAQAADECFGQSESTLVMSTGVIGQRLPIEKITSNIPRAHKAMGSSHDHWLTAAKAICTTDTFPKLISRSFKLPSSPSVEYRIAGMTKGAGMIHPNMATLLGIIATDAPVSSTVLPAVLKHAVDRSFNSITIDGDTSTNDTVALLANGAAGGKEVVANTPDYDAFQTVLTDFSTDLAKLIVRDGEGATKFVTIRVVEAASEEAARKIASTIARSPLVKTALYGKDANWGRILCATGYSLVSEPGLPVNDIPEVVPEKTNVSFIPTDGTAELKLLVNGEPEQVDEARAAEILELEDLEILVRLGTGDKQATYWTCDYSHEYITINGDYRT</sequence>
<feature type="chain" id="PRO_0000398112" description="Arginine biosynthesis bifunctional protein ArgJ alpha chain" evidence="1">
    <location>
        <begin position="1"/>
        <end position="238"/>
    </location>
</feature>
<feature type="chain" id="PRO_0000398113" description="Arginine biosynthesis bifunctional protein ArgJ beta chain" evidence="1">
    <location>
        <begin position="239"/>
        <end position="469"/>
    </location>
</feature>
<feature type="active site" description="Nucleophile" evidence="1">
    <location>
        <position position="239"/>
    </location>
</feature>
<feature type="binding site" evidence="1">
    <location>
        <position position="199"/>
    </location>
    <ligand>
        <name>substrate</name>
    </ligand>
</feature>
<feature type="binding site" evidence="1">
    <location>
        <position position="228"/>
    </location>
    <ligand>
        <name>substrate</name>
    </ligand>
</feature>
<feature type="binding site" evidence="1">
    <location>
        <position position="239"/>
    </location>
    <ligand>
        <name>substrate</name>
    </ligand>
</feature>
<feature type="binding site" evidence="1">
    <location>
        <position position="325"/>
    </location>
    <ligand>
        <name>substrate</name>
    </ligand>
</feature>
<feature type="binding site" evidence="1">
    <location>
        <position position="464"/>
    </location>
    <ligand>
        <name>substrate</name>
    </ligand>
</feature>
<feature type="binding site" evidence="1">
    <location>
        <position position="469"/>
    </location>
    <ligand>
        <name>substrate</name>
    </ligand>
</feature>
<feature type="site" description="Involved in the stabilization of negative charge on the oxyanion by the formation of the oxyanion hole" evidence="1">
    <location>
        <position position="160"/>
    </location>
</feature>
<feature type="site" description="Involved in the stabilization of negative charge on the oxyanion by the formation of the oxyanion hole" evidence="1">
    <location>
        <position position="161"/>
    </location>
</feature>
<feature type="site" description="Cleavage; by autolysis" evidence="1">
    <location>
        <begin position="238"/>
        <end position="239"/>
    </location>
</feature>
<gene>
    <name type="ORF">SMAC_03990</name>
</gene>
<organism>
    <name type="scientific">Sordaria macrospora (strain ATCC MYA-333 / DSM 997 / K(L3346) / K-hell)</name>
    <dbReference type="NCBI Taxonomy" id="771870"/>
    <lineage>
        <taxon>Eukaryota</taxon>
        <taxon>Fungi</taxon>
        <taxon>Dikarya</taxon>
        <taxon>Ascomycota</taxon>
        <taxon>Pezizomycotina</taxon>
        <taxon>Sordariomycetes</taxon>
        <taxon>Sordariomycetidae</taxon>
        <taxon>Sordariales</taxon>
        <taxon>Sordariaceae</taxon>
        <taxon>Sordaria</taxon>
    </lineage>
</organism>
<dbReference type="EC" id="2.3.1.35" evidence="1"/>
<dbReference type="EC" id="2.3.1.1" evidence="1"/>
<dbReference type="EMBL" id="CABT02000017">
    <property type="protein sequence ID" value="CCC11287.1"/>
    <property type="molecule type" value="Genomic_DNA"/>
</dbReference>
<dbReference type="RefSeq" id="XP_003348145.1">
    <property type="nucleotide sequence ID" value="XM_003348097.1"/>
</dbReference>
<dbReference type="SMR" id="D1ZHR9"/>
<dbReference type="FunCoup" id="D1ZHR9">
    <property type="interactions" value="273"/>
</dbReference>
<dbReference type="STRING" id="771870.D1ZHR9"/>
<dbReference type="MEROPS" id="T05.001"/>
<dbReference type="GeneID" id="10805596"/>
<dbReference type="KEGG" id="smp:10805596"/>
<dbReference type="VEuPathDB" id="FungiDB:SMAC_03990"/>
<dbReference type="eggNOG" id="KOG2786">
    <property type="taxonomic scope" value="Eukaryota"/>
</dbReference>
<dbReference type="HOGENOM" id="CLU_027172_1_0_1"/>
<dbReference type="InParanoid" id="D1ZHR9"/>
<dbReference type="OMA" id="WGRIVMA"/>
<dbReference type="OrthoDB" id="4199794at2759"/>
<dbReference type="UniPathway" id="UPA00068">
    <property type="reaction ID" value="UER00106"/>
</dbReference>
<dbReference type="UniPathway" id="UPA00068">
    <property type="reaction ID" value="UER00111"/>
</dbReference>
<dbReference type="Proteomes" id="UP000001881">
    <property type="component" value="Unassembled WGS sequence"/>
</dbReference>
<dbReference type="GO" id="GO:0005759">
    <property type="term" value="C:mitochondrial matrix"/>
    <property type="evidence" value="ECO:0007669"/>
    <property type="project" value="UniProtKB-SubCell"/>
</dbReference>
<dbReference type="GO" id="GO:0004358">
    <property type="term" value="F:glutamate N-acetyltransferase activity"/>
    <property type="evidence" value="ECO:0007669"/>
    <property type="project" value="UniProtKB-UniRule"/>
</dbReference>
<dbReference type="GO" id="GO:0004042">
    <property type="term" value="F:L-glutamate N-acetyltransferase activity"/>
    <property type="evidence" value="ECO:0007669"/>
    <property type="project" value="UniProtKB-UniRule"/>
</dbReference>
<dbReference type="GO" id="GO:0006526">
    <property type="term" value="P:L-arginine biosynthetic process"/>
    <property type="evidence" value="ECO:0007669"/>
    <property type="project" value="UniProtKB-UniRule"/>
</dbReference>
<dbReference type="GO" id="GO:0006592">
    <property type="term" value="P:ornithine biosynthetic process"/>
    <property type="evidence" value="ECO:0007669"/>
    <property type="project" value="EnsemblFungi"/>
</dbReference>
<dbReference type="CDD" id="cd02152">
    <property type="entry name" value="OAT"/>
    <property type="match status" value="1"/>
</dbReference>
<dbReference type="FunFam" id="3.60.70.12:FF:000001">
    <property type="entry name" value="Arginine biosynthesis bifunctional protein ArgJ, chloroplastic"/>
    <property type="match status" value="1"/>
</dbReference>
<dbReference type="FunFam" id="3.10.20.340:FF:000002">
    <property type="entry name" value="Arginine biosynthesis bifunctional protein ArgJ, mitochondrial"/>
    <property type="match status" value="1"/>
</dbReference>
<dbReference type="FunFam" id="3.30.2330.10:FF:000001">
    <property type="entry name" value="Arginine biosynthesis bifunctional protein ArgJ, mitochondrial"/>
    <property type="match status" value="1"/>
</dbReference>
<dbReference type="Gene3D" id="3.30.2330.10">
    <property type="entry name" value="arginine biosynthesis bifunctional protein suprefamily"/>
    <property type="match status" value="1"/>
</dbReference>
<dbReference type="Gene3D" id="3.10.20.340">
    <property type="entry name" value="ArgJ beta chain, C-terminal domain"/>
    <property type="match status" value="1"/>
</dbReference>
<dbReference type="Gene3D" id="3.60.70.12">
    <property type="entry name" value="L-amino peptidase D-ALA esterase/amidase"/>
    <property type="match status" value="1"/>
</dbReference>
<dbReference type="HAMAP" id="MF_01106">
    <property type="entry name" value="ArgJ"/>
    <property type="match status" value="1"/>
</dbReference>
<dbReference type="InterPro" id="IPR002813">
    <property type="entry name" value="Arg_biosynth_ArgJ"/>
</dbReference>
<dbReference type="InterPro" id="IPR016117">
    <property type="entry name" value="ArgJ-like_dom_sf"/>
</dbReference>
<dbReference type="InterPro" id="IPR042195">
    <property type="entry name" value="ArgJ_beta_C"/>
</dbReference>
<dbReference type="NCBIfam" id="TIGR00120">
    <property type="entry name" value="ArgJ"/>
    <property type="match status" value="1"/>
</dbReference>
<dbReference type="NCBIfam" id="NF003802">
    <property type="entry name" value="PRK05388.1"/>
    <property type="match status" value="1"/>
</dbReference>
<dbReference type="PANTHER" id="PTHR23100">
    <property type="entry name" value="ARGININE BIOSYNTHESIS BIFUNCTIONAL PROTEIN ARGJ"/>
    <property type="match status" value="1"/>
</dbReference>
<dbReference type="PANTHER" id="PTHR23100:SF0">
    <property type="entry name" value="ARGININE BIOSYNTHESIS BIFUNCTIONAL PROTEIN ARGJ, MITOCHONDRIAL"/>
    <property type="match status" value="1"/>
</dbReference>
<dbReference type="Pfam" id="PF01960">
    <property type="entry name" value="ArgJ"/>
    <property type="match status" value="1"/>
</dbReference>
<dbReference type="SUPFAM" id="SSF56266">
    <property type="entry name" value="DmpA/ArgJ-like"/>
    <property type="match status" value="1"/>
</dbReference>
<evidence type="ECO:0000255" key="1">
    <source>
        <dbReference type="HAMAP-Rule" id="MF_03124"/>
    </source>
</evidence>
<comment type="function">
    <text evidence="1">Catalyzes two activities which are involved in the cyclic version of arginine biosynthesis: the synthesis of acetylglutamate from glutamate and acetyl-CoA, and of ornithine by transacetylation between acetylornithine and glutamate.</text>
</comment>
<comment type="catalytic activity">
    <reaction evidence="1">
        <text>N(2)-acetyl-L-ornithine + L-glutamate = N-acetyl-L-glutamate + L-ornithine</text>
        <dbReference type="Rhea" id="RHEA:15349"/>
        <dbReference type="ChEBI" id="CHEBI:29985"/>
        <dbReference type="ChEBI" id="CHEBI:44337"/>
        <dbReference type="ChEBI" id="CHEBI:46911"/>
        <dbReference type="ChEBI" id="CHEBI:57805"/>
        <dbReference type="EC" id="2.3.1.35"/>
    </reaction>
</comment>
<comment type="catalytic activity">
    <reaction evidence="1">
        <text>L-glutamate + acetyl-CoA = N-acetyl-L-glutamate + CoA + H(+)</text>
        <dbReference type="Rhea" id="RHEA:24292"/>
        <dbReference type="ChEBI" id="CHEBI:15378"/>
        <dbReference type="ChEBI" id="CHEBI:29985"/>
        <dbReference type="ChEBI" id="CHEBI:44337"/>
        <dbReference type="ChEBI" id="CHEBI:57287"/>
        <dbReference type="ChEBI" id="CHEBI:57288"/>
        <dbReference type="EC" id="2.3.1.1"/>
    </reaction>
</comment>
<comment type="pathway">
    <text evidence="1">Amino-acid biosynthesis; L-arginine biosynthesis; L-ornithine and N-acetyl-L-glutamate from L-glutamate and N(2)-acetyl-L-ornithine (cyclic): step 1/1.</text>
</comment>
<comment type="pathway">
    <text evidence="1">Amino-acid biosynthesis; L-arginine biosynthesis; N(2)-acetyl-L-ornithine from L-glutamate: step 1/4.</text>
</comment>
<comment type="subunit">
    <text evidence="1">Heterodimer of an alpha and a beta chain.</text>
</comment>
<comment type="subcellular location">
    <subcellularLocation>
        <location evidence="1">Mitochondrion matrix</location>
    </subcellularLocation>
</comment>
<comment type="PTM">
    <text evidence="1">The alpha and beta chains are autoproteolytically processed from a single precursor protein within the mitochondrion.</text>
</comment>
<comment type="miscellaneous">
    <text evidence="1">This protein may be expected to contain an N-terminal transit peptide but none has been predicted.</text>
</comment>
<comment type="similarity">
    <text evidence="1">Belongs to the ArgJ family.</text>
</comment>